<protein>
    <recommendedName>
        <fullName evidence="1">2-isopropylmalate synthase</fullName>
        <ecNumber evidence="1">2.3.3.13</ecNumber>
    </recommendedName>
    <alternativeName>
        <fullName evidence="1">Alpha-IPM synthase</fullName>
    </alternativeName>
    <alternativeName>
        <fullName evidence="1">Alpha-isopropylmalate synthase</fullName>
    </alternativeName>
</protein>
<accession>A5MZ76</accession>
<dbReference type="EC" id="2.3.3.13" evidence="1"/>
<dbReference type="EMBL" id="CP000673">
    <property type="protein sequence ID" value="EDK34172.1"/>
    <property type="molecule type" value="Genomic_DNA"/>
</dbReference>
<dbReference type="RefSeq" id="WP_012102499.1">
    <property type="nucleotide sequence ID" value="NC_009706.1"/>
</dbReference>
<dbReference type="SMR" id="A5MZ76"/>
<dbReference type="STRING" id="431943.CKL_2160"/>
<dbReference type="KEGG" id="ckl:CKL_2160"/>
<dbReference type="eggNOG" id="COG0119">
    <property type="taxonomic scope" value="Bacteria"/>
</dbReference>
<dbReference type="HOGENOM" id="CLU_022158_0_1_9"/>
<dbReference type="UniPathway" id="UPA00048">
    <property type="reaction ID" value="UER00070"/>
</dbReference>
<dbReference type="Proteomes" id="UP000002411">
    <property type="component" value="Chromosome"/>
</dbReference>
<dbReference type="GO" id="GO:0005737">
    <property type="term" value="C:cytoplasm"/>
    <property type="evidence" value="ECO:0007669"/>
    <property type="project" value="UniProtKB-SubCell"/>
</dbReference>
<dbReference type="GO" id="GO:0003852">
    <property type="term" value="F:2-isopropylmalate synthase activity"/>
    <property type="evidence" value="ECO:0007669"/>
    <property type="project" value="UniProtKB-UniRule"/>
</dbReference>
<dbReference type="GO" id="GO:0003985">
    <property type="term" value="F:acetyl-CoA C-acetyltransferase activity"/>
    <property type="evidence" value="ECO:0007669"/>
    <property type="project" value="UniProtKB-UniRule"/>
</dbReference>
<dbReference type="GO" id="GO:0030145">
    <property type="term" value="F:manganese ion binding"/>
    <property type="evidence" value="ECO:0007669"/>
    <property type="project" value="UniProtKB-UniRule"/>
</dbReference>
<dbReference type="GO" id="GO:0009098">
    <property type="term" value="P:L-leucine biosynthetic process"/>
    <property type="evidence" value="ECO:0007669"/>
    <property type="project" value="UniProtKB-UniRule"/>
</dbReference>
<dbReference type="CDD" id="cd07940">
    <property type="entry name" value="DRE_TIM_IPMS"/>
    <property type="match status" value="1"/>
</dbReference>
<dbReference type="FunFam" id="1.10.238.260:FF:000001">
    <property type="entry name" value="2-isopropylmalate synthase"/>
    <property type="match status" value="1"/>
</dbReference>
<dbReference type="FunFam" id="3.20.20.70:FF:000010">
    <property type="entry name" value="2-isopropylmalate synthase"/>
    <property type="match status" value="1"/>
</dbReference>
<dbReference type="FunFam" id="3.30.160.270:FF:000001">
    <property type="entry name" value="2-isopropylmalate synthase"/>
    <property type="match status" value="1"/>
</dbReference>
<dbReference type="Gene3D" id="1.10.238.260">
    <property type="match status" value="1"/>
</dbReference>
<dbReference type="Gene3D" id="3.30.160.270">
    <property type="match status" value="1"/>
</dbReference>
<dbReference type="Gene3D" id="3.20.20.70">
    <property type="entry name" value="Aldolase class I"/>
    <property type="match status" value="1"/>
</dbReference>
<dbReference type="HAMAP" id="MF_01025">
    <property type="entry name" value="LeuA_type1"/>
    <property type="match status" value="1"/>
</dbReference>
<dbReference type="InterPro" id="IPR050073">
    <property type="entry name" value="2-IPM_HCS-like"/>
</dbReference>
<dbReference type="InterPro" id="IPR013709">
    <property type="entry name" value="2-isopropylmalate_synth_dimer"/>
</dbReference>
<dbReference type="InterPro" id="IPR002034">
    <property type="entry name" value="AIPM/Hcit_synth_CS"/>
</dbReference>
<dbReference type="InterPro" id="IPR013785">
    <property type="entry name" value="Aldolase_TIM"/>
</dbReference>
<dbReference type="InterPro" id="IPR054691">
    <property type="entry name" value="LeuA/HCS_post-cat"/>
</dbReference>
<dbReference type="InterPro" id="IPR036230">
    <property type="entry name" value="LeuA_allosteric_dom_sf"/>
</dbReference>
<dbReference type="InterPro" id="IPR005671">
    <property type="entry name" value="LeuA_bact_synth"/>
</dbReference>
<dbReference type="InterPro" id="IPR000891">
    <property type="entry name" value="PYR_CT"/>
</dbReference>
<dbReference type="NCBIfam" id="TIGR00973">
    <property type="entry name" value="leuA_bact"/>
    <property type="match status" value="1"/>
</dbReference>
<dbReference type="NCBIfam" id="NF002085">
    <property type="entry name" value="PRK00915.1-2"/>
    <property type="match status" value="1"/>
</dbReference>
<dbReference type="NCBIfam" id="NF002086">
    <property type="entry name" value="PRK00915.1-3"/>
    <property type="match status" value="1"/>
</dbReference>
<dbReference type="PANTHER" id="PTHR10277:SF9">
    <property type="entry name" value="2-ISOPROPYLMALATE SYNTHASE 1, CHLOROPLASTIC-RELATED"/>
    <property type="match status" value="1"/>
</dbReference>
<dbReference type="PANTHER" id="PTHR10277">
    <property type="entry name" value="HOMOCITRATE SYNTHASE-RELATED"/>
    <property type="match status" value="1"/>
</dbReference>
<dbReference type="Pfam" id="PF22617">
    <property type="entry name" value="HCS_D2"/>
    <property type="match status" value="1"/>
</dbReference>
<dbReference type="Pfam" id="PF00682">
    <property type="entry name" value="HMGL-like"/>
    <property type="match status" value="1"/>
</dbReference>
<dbReference type="Pfam" id="PF08502">
    <property type="entry name" value="LeuA_dimer"/>
    <property type="match status" value="1"/>
</dbReference>
<dbReference type="SMART" id="SM00917">
    <property type="entry name" value="LeuA_dimer"/>
    <property type="match status" value="1"/>
</dbReference>
<dbReference type="SUPFAM" id="SSF110921">
    <property type="entry name" value="2-isopropylmalate synthase LeuA, allosteric (dimerisation) domain"/>
    <property type="match status" value="1"/>
</dbReference>
<dbReference type="SUPFAM" id="SSF51569">
    <property type="entry name" value="Aldolase"/>
    <property type="match status" value="1"/>
</dbReference>
<dbReference type="PROSITE" id="PS00815">
    <property type="entry name" value="AIPM_HOMOCIT_SYNTH_1"/>
    <property type="match status" value="1"/>
</dbReference>
<dbReference type="PROSITE" id="PS00816">
    <property type="entry name" value="AIPM_HOMOCIT_SYNTH_2"/>
    <property type="match status" value="1"/>
</dbReference>
<dbReference type="PROSITE" id="PS50991">
    <property type="entry name" value="PYR_CT"/>
    <property type="match status" value="1"/>
</dbReference>
<feature type="chain" id="PRO_1000149171" description="2-isopropylmalate synthase">
    <location>
        <begin position="1"/>
        <end position="514"/>
    </location>
</feature>
<feature type="domain" description="Pyruvate carboxyltransferase" evidence="1">
    <location>
        <begin position="5"/>
        <end position="267"/>
    </location>
</feature>
<feature type="region of interest" description="Regulatory domain" evidence="1">
    <location>
        <begin position="392"/>
        <end position="514"/>
    </location>
</feature>
<feature type="binding site" evidence="1">
    <location>
        <position position="14"/>
    </location>
    <ligand>
        <name>Mn(2+)</name>
        <dbReference type="ChEBI" id="CHEBI:29035"/>
    </ligand>
</feature>
<feature type="binding site" evidence="1">
    <location>
        <position position="202"/>
    </location>
    <ligand>
        <name>Mn(2+)</name>
        <dbReference type="ChEBI" id="CHEBI:29035"/>
    </ligand>
</feature>
<feature type="binding site" evidence="1">
    <location>
        <position position="204"/>
    </location>
    <ligand>
        <name>Mn(2+)</name>
        <dbReference type="ChEBI" id="CHEBI:29035"/>
    </ligand>
</feature>
<feature type="binding site" evidence="1">
    <location>
        <position position="238"/>
    </location>
    <ligand>
        <name>Mn(2+)</name>
        <dbReference type="ChEBI" id="CHEBI:29035"/>
    </ligand>
</feature>
<keyword id="KW-0028">Amino-acid biosynthesis</keyword>
<keyword id="KW-0100">Branched-chain amino acid biosynthesis</keyword>
<keyword id="KW-0963">Cytoplasm</keyword>
<keyword id="KW-0432">Leucine biosynthesis</keyword>
<keyword id="KW-0464">Manganese</keyword>
<keyword id="KW-0479">Metal-binding</keyword>
<keyword id="KW-1185">Reference proteome</keyword>
<keyword id="KW-0808">Transferase</keyword>
<sequence>MTKKIYIFDTTLRDGEQTPKVSLNINDKITIAKQLQKLSVDVIEAGFPKASHGDFEAVKAIAESIQGPVIVGLARASKEDIDCAWEALKGSLKPRIHIFLATSDIHMEHKLKMKPEEVLKRAADMVRYAKGLCPSIEFSPEDATRTRPEFLYKVLEAVIEAGADVVNIPDTVGYTTPVEYGAFIRGIKENVKNIEDAIISVHCHNDLGLAVANSLAAIESGAEQVECAINGLGERAGNAALEEIVMAISTRADSFNCHTDIVTEEITKTSSIVSHVTGMQVQGNKAIVGANAFAHESGIHQHGVLNCRETYEIMTPESVGLKKNFIVLGKHSGRHAFVEHLHEMGYKDLSVEKTDEIFKKFKELADKKKHISDEDIESLVKNEIFHVPEVFKLKYYQVFTGNTVVSTSTVEIECNGKKLSEASCGDGPVDATFKAIEKATGIDVTLNDYFIKAVGSGKDAMGEVTVRIEKEGKIFSAKGISTDIVEASGIAFINAVNKLYYETYSKDLQKISAN</sequence>
<organism>
    <name type="scientific">Clostridium kluyveri (strain ATCC 8527 / DSM 555 / NBRC 12016 / NCIMB 10680 / K1)</name>
    <dbReference type="NCBI Taxonomy" id="431943"/>
    <lineage>
        <taxon>Bacteria</taxon>
        <taxon>Bacillati</taxon>
        <taxon>Bacillota</taxon>
        <taxon>Clostridia</taxon>
        <taxon>Eubacteriales</taxon>
        <taxon>Clostridiaceae</taxon>
        <taxon>Clostridium</taxon>
    </lineage>
</organism>
<name>LEU1_CLOK5</name>
<evidence type="ECO:0000255" key="1">
    <source>
        <dbReference type="HAMAP-Rule" id="MF_01025"/>
    </source>
</evidence>
<reference key="1">
    <citation type="journal article" date="2008" name="Proc. Natl. Acad. Sci. U.S.A.">
        <title>The genome of Clostridium kluyveri, a strict anaerobe with unique metabolic features.</title>
        <authorList>
            <person name="Seedorf H."/>
            <person name="Fricke W.F."/>
            <person name="Veith B."/>
            <person name="Brueggemann H."/>
            <person name="Liesegang H."/>
            <person name="Strittmatter A."/>
            <person name="Miethke M."/>
            <person name="Buckel W."/>
            <person name="Hinderberger J."/>
            <person name="Li F."/>
            <person name="Hagemeier C."/>
            <person name="Thauer R.K."/>
            <person name="Gottschalk G."/>
        </authorList>
    </citation>
    <scope>NUCLEOTIDE SEQUENCE [LARGE SCALE GENOMIC DNA]</scope>
    <source>
        <strain>ATCC 8527 / DSM 555 / NBRC 12016 / NCIMB 10680 / K1</strain>
    </source>
</reference>
<comment type="function">
    <text evidence="1">Catalyzes the condensation of the acetyl group of acetyl-CoA with 3-methyl-2-oxobutanoate (2-ketoisovalerate) to form 3-carboxy-3-hydroxy-4-methylpentanoate (2-isopropylmalate).</text>
</comment>
<comment type="catalytic activity">
    <reaction evidence="1">
        <text>3-methyl-2-oxobutanoate + acetyl-CoA + H2O = (2S)-2-isopropylmalate + CoA + H(+)</text>
        <dbReference type="Rhea" id="RHEA:21524"/>
        <dbReference type="ChEBI" id="CHEBI:1178"/>
        <dbReference type="ChEBI" id="CHEBI:11851"/>
        <dbReference type="ChEBI" id="CHEBI:15377"/>
        <dbReference type="ChEBI" id="CHEBI:15378"/>
        <dbReference type="ChEBI" id="CHEBI:57287"/>
        <dbReference type="ChEBI" id="CHEBI:57288"/>
        <dbReference type="EC" id="2.3.3.13"/>
    </reaction>
</comment>
<comment type="cofactor">
    <cofactor evidence="1">
        <name>Mn(2+)</name>
        <dbReference type="ChEBI" id="CHEBI:29035"/>
    </cofactor>
</comment>
<comment type="pathway">
    <text evidence="1">Amino-acid biosynthesis; L-leucine biosynthesis; L-leucine from 3-methyl-2-oxobutanoate: step 1/4.</text>
</comment>
<comment type="subunit">
    <text evidence="1">Homodimer.</text>
</comment>
<comment type="subcellular location">
    <subcellularLocation>
        <location evidence="1">Cytoplasm</location>
    </subcellularLocation>
</comment>
<comment type="similarity">
    <text evidence="1">Belongs to the alpha-IPM synthase/homocitrate synthase family. LeuA type 1 subfamily.</text>
</comment>
<proteinExistence type="inferred from homology"/>
<gene>
    <name evidence="1" type="primary">leuA</name>
    <name type="ordered locus">CKL_2160</name>
</gene>